<comment type="function">
    <text evidence="1">Transcriptional repressor that controls expression of the genes required for the catabolism of sialic acids.</text>
</comment>
<comment type="similarity">
    <text evidence="1">Belongs to the NanR family.</text>
</comment>
<accession>Q1R6B4</accession>
<proteinExistence type="inferred from homology"/>
<protein>
    <recommendedName>
        <fullName evidence="1">HTH-type transcriptional repressor NanR</fullName>
    </recommendedName>
</protein>
<reference key="1">
    <citation type="journal article" date="2006" name="Proc. Natl. Acad. Sci. U.S.A.">
        <title>Identification of genes subject to positive selection in uropathogenic strains of Escherichia coli: a comparative genomics approach.</title>
        <authorList>
            <person name="Chen S.L."/>
            <person name="Hung C.-S."/>
            <person name="Xu J."/>
            <person name="Reigstad C.S."/>
            <person name="Magrini V."/>
            <person name="Sabo A."/>
            <person name="Blasiar D."/>
            <person name="Bieri T."/>
            <person name="Meyer R.R."/>
            <person name="Ozersky P."/>
            <person name="Armstrong J.R."/>
            <person name="Fulton R.S."/>
            <person name="Latreille J.P."/>
            <person name="Spieth J."/>
            <person name="Hooton T.M."/>
            <person name="Mardis E.R."/>
            <person name="Hultgren S.J."/>
            <person name="Gordon J.I."/>
        </authorList>
    </citation>
    <scope>NUCLEOTIDE SEQUENCE [LARGE SCALE GENOMIC DNA]</scope>
    <source>
        <strain>UTI89 / UPEC</strain>
    </source>
</reference>
<gene>
    <name evidence="1" type="primary">nanR</name>
    <name type="ordered locus">UTI89_C3656</name>
</gene>
<evidence type="ECO:0000255" key="1">
    <source>
        <dbReference type="HAMAP-Rule" id="MF_01236"/>
    </source>
</evidence>
<evidence type="ECO:0000256" key="2">
    <source>
        <dbReference type="SAM" id="MobiDB-lite"/>
    </source>
</evidence>
<name>NANR_ECOUT</name>
<organism>
    <name type="scientific">Escherichia coli (strain UTI89 / UPEC)</name>
    <dbReference type="NCBI Taxonomy" id="364106"/>
    <lineage>
        <taxon>Bacteria</taxon>
        <taxon>Pseudomonadati</taxon>
        <taxon>Pseudomonadota</taxon>
        <taxon>Gammaproteobacteria</taxon>
        <taxon>Enterobacterales</taxon>
        <taxon>Enterobacteriaceae</taxon>
        <taxon>Escherichia</taxon>
    </lineage>
</organism>
<feature type="chain" id="PRO_0000301522" description="HTH-type transcriptional repressor NanR">
    <location>
        <begin position="1"/>
        <end position="263"/>
    </location>
</feature>
<feature type="domain" description="HTH gntR-type" evidence="1">
    <location>
        <begin position="30"/>
        <end position="98"/>
    </location>
</feature>
<feature type="DNA-binding region" description="H-T-H motif" evidence="1">
    <location>
        <begin position="58"/>
        <end position="77"/>
    </location>
</feature>
<feature type="region of interest" description="Disordered" evidence="2">
    <location>
        <begin position="1"/>
        <end position="23"/>
    </location>
</feature>
<sequence>MSPMNAFDPQAEDSTTTIGRNLRSRPLARKKLSEMVEEELEQMIRRREFGEGEQLPSERELMAFFNVGRPSVREALAALKRKGLVQINNGERARVSRPSADTIIGELSGMAKDFLSHPGGIAHFEQLRLFFESSLVRYAAEHATDEQIDLLAKALEINSQSLDNNAAFIRSDVDFHRVLAEIPGNPIFMAIHVALLDWLIAARPTVADQALHEHNNVSYQQHIAIVDAIRRHDPDEADRALQSHLNSVSATWHAFGQTTNKKK</sequence>
<dbReference type="EMBL" id="CP000243">
    <property type="protein sequence ID" value="ABE09100.1"/>
    <property type="molecule type" value="Genomic_DNA"/>
</dbReference>
<dbReference type="RefSeq" id="WP_000074795.1">
    <property type="nucleotide sequence ID" value="NZ_CP064825.1"/>
</dbReference>
<dbReference type="SMR" id="Q1R6B4"/>
<dbReference type="KEGG" id="eci:UTI89_C3656"/>
<dbReference type="HOGENOM" id="CLU_017584_9_1_6"/>
<dbReference type="Proteomes" id="UP000001952">
    <property type="component" value="Chromosome"/>
</dbReference>
<dbReference type="GO" id="GO:0003677">
    <property type="term" value="F:DNA binding"/>
    <property type="evidence" value="ECO:0007669"/>
    <property type="project" value="UniProtKB-KW"/>
</dbReference>
<dbReference type="GO" id="GO:0003700">
    <property type="term" value="F:DNA-binding transcription factor activity"/>
    <property type="evidence" value="ECO:0007669"/>
    <property type="project" value="UniProtKB-UniRule"/>
</dbReference>
<dbReference type="GO" id="GO:0045892">
    <property type="term" value="P:negative regulation of DNA-templated transcription"/>
    <property type="evidence" value="ECO:0007669"/>
    <property type="project" value="UniProtKB-UniRule"/>
</dbReference>
<dbReference type="CDD" id="cd07377">
    <property type="entry name" value="WHTH_GntR"/>
    <property type="match status" value="1"/>
</dbReference>
<dbReference type="FunFam" id="1.10.10.10:FF:000150">
    <property type="entry name" value="HTH-type transcriptional repressor NanR"/>
    <property type="match status" value="1"/>
</dbReference>
<dbReference type="FunFam" id="1.20.120.530:FF:000006">
    <property type="entry name" value="HTH-type transcriptional repressor NanR"/>
    <property type="match status" value="1"/>
</dbReference>
<dbReference type="Gene3D" id="1.20.120.530">
    <property type="entry name" value="GntR ligand-binding domain-like"/>
    <property type="match status" value="1"/>
</dbReference>
<dbReference type="Gene3D" id="1.10.10.10">
    <property type="entry name" value="Winged helix-like DNA-binding domain superfamily/Winged helix DNA-binding domain"/>
    <property type="match status" value="1"/>
</dbReference>
<dbReference type="HAMAP" id="MF_01236">
    <property type="entry name" value="HTH_NanR"/>
    <property type="match status" value="1"/>
</dbReference>
<dbReference type="InterPro" id="IPR011711">
    <property type="entry name" value="GntR_C"/>
</dbReference>
<dbReference type="InterPro" id="IPR008920">
    <property type="entry name" value="TF_FadR/GntR_C"/>
</dbReference>
<dbReference type="InterPro" id="IPR000524">
    <property type="entry name" value="Tscrpt_reg_HTH_GntR"/>
</dbReference>
<dbReference type="InterPro" id="IPR023730">
    <property type="entry name" value="Tscrpt_reg_NanR"/>
</dbReference>
<dbReference type="InterPro" id="IPR036388">
    <property type="entry name" value="WH-like_DNA-bd_sf"/>
</dbReference>
<dbReference type="InterPro" id="IPR036390">
    <property type="entry name" value="WH_DNA-bd_sf"/>
</dbReference>
<dbReference type="NCBIfam" id="NF003011">
    <property type="entry name" value="PRK03837.1"/>
    <property type="match status" value="1"/>
</dbReference>
<dbReference type="PANTHER" id="PTHR43537:SF53">
    <property type="entry name" value="HTH-TYPE TRANSCRIPTIONAL REPRESSOR NANR"/>
    <property type="match status" value="1"/>
</dbReference>
<dbReference type="PANTHER" id="PTHR43537">
    <property type="entry name" value="TRANSCRIPTIONAL REGULATOR, GNTR FAMILY"/>
    <property type="match status" value="1"/>
</dbReference>
<dbReference type="Pfam" id="PF07729">
    <property type="entry name" value="FCD"/>
    <property type="match status" value="1"/>
</dbReference>
<dbReference type="Pfam" id="PF00392">
    <property type="entry name" value="GntR"/>
    <property type="match status" value="1"/>
</dbReference>
<dbReference type="PRINTS" id="PR00035">
    <property type="entry name" value="HTHGNTR"/>
</dbReference>
<dbReference type="SMART" id="SM00895">
    <property type="entry name" value="FCD"/>
    <property type="match status" value="1"/>
</dbReference>
<dbReference type="SMART" id="SM00345">
    <property type="entry name" value="HTH_GNTR"/>
    <property type="match status" value="1"/>
</dbReference>
<dbReference type="SUPFAM" id="SSF48008">
    <property type="entry name" value="GntR ligand-binding domain-like"/>
    <property type="match status" value="1"/>
</dbReference>
<dbReference type="SUPFAM" id="SSF46785">
    <property type="entry name" value="Winged helix' DNA-binding domain"/>
    <property type="match status" value="1"/>
</dbReference>
<dbReference type="PROSITE" id="PS50949">
    <property type="entry name" value="HTH_GNTR"/>
    <property type="match status" value="1"/>
</dbReference>
<keyword id="KW-0238">DNA-binding</keyword>
<keyword id="KW-0678">Repressor</keyword>
<keyword id="KW-0804">Transcription</keyword>
<keyword id="KW-0805">Transcription regulation</keyword>